<sequence length="80" mass="9156">MAVGISPGELRELTEEELTERLRESKEELFNLRFQMATGQLNNNRRLRTVRQEIARVYTVLRERELGLAAGPGEPDGKES</sequence>
<feature type="chain" id="PRO_1000007536" description="Large ribosomal subunit protein uL29">
    <location>
        <begin position="1"/>
        <end position="80"/>
    </location>
</feature>
<dbReference type="EMBL" id="CP000325">
    <property type="protein sequence ID" value="ABL03440.1"/>
    <property type="molecule type" value="Genomic_DNA"/>
</dbReference>
<dbReference type="RefSeq" id="WP_011739065.1">
    <property type="nucleotide sequence ID" value="NC_008611.1"/>
</dbReference>
<dbReference type="SMR" id="A0PM71"/>
<dbReference type="GeneID" id="93438592"/>
<dbReference type="KEGG" id="mul:MUL_0798"/>
<dbReference type="eggNOG" id="COG0255">
    <property type="taxonomic scope" value="Bacteria"/>
</dbReference>
<dbReference type="HOGENOM" id="CLU_158491_3_3_11"/>
<dbReference type="Proteomes" id="UP000000765">
    <property type="component" value="Chromosome"/>
</dbReference>
<dbReference type="GO" id="GO:0022625">
    <property type="term" value="C:cytosolic large ribosomal subunit"/>
    <property type="evidence" value="ECO:0007669"/>
    <property type="project" value="TreeGrafter"/>
</dbReference>
<dbReference type="GO" id="GO:0003735">
    <property type="term" value="F:structural constituent of ribosome"/>
    <property type="evidence" value="ECO:0007669"/>
    <property type="project" value="InterPro"/>
</dbReference>
<dbReference type="GO" id="GO:0006412">
    <property type="term" value="P:translation"/>
    <property type="evidence" value="ECO:0007669"/>
    <property type="project" value="UniProtKB-UniRule"/>
</dbReference>
<dbReference type="CDD" id="cd00427">
    <property type="entry name" value="Ribosomal_L29_HIP"/>
    <property type="match status" value="1"/>
</dbReference>
<dbReference type="FunFam" id="1.10.287.310:FF:000001">
    <property type="entry name" value="50S ribosomal protein L29"/>
    <property type="match status" value="1"/>
</dbReference>
<dbReference type="Gene3D" id="1.10.287.310">
    <property type="match status" value="1"/>
</dbReference>
<dbReference type="HAMAP" id="MF_00374">
    <property type="entry name" value="Ribosomal_uL29"/>
    <property type="match status" value="1"/>
</dbReference>
<dbReference type="InterPro" id="IPR050063">
    <property type="entry name" value="Ribosomal_protein_uL29"/>
</dbReference>
<dbReference type="InterPro" id="IPR001854">
    <property type="entry name" value="Ribosomal_uL29"/>
</dbReference>
<dbReference type="InterPro" id="IPR018254">
    <property type="entry name" value="Ribosomal_uL29_CS"/>
</dbReference>
<dbReference type="InterPro" id="IPR036049">
    <property type="entry name" value="Ribosomal_uL29_sf"/>
</dbReference>
<dbReference type="NCBIfam" id="TIGR00012">
    <property type="entry name" value="L29"/>
    <property type="match status" value="1"/>
</dbReference>
<dbReference type="PANTHER" id="PTHR10916">
    <property type="entry name" value="60S RIBOSOMAL PROTEIN L35/50S RIBOSOMAL PROTEIN L29"/>
    <property type="match status" value="1"/>
</dbReference>
<dbReference type="PANTHER" id="PTHR10916:SF0">
    <property type="entry name" value="LARGE RIBOSOMAL SUBUNIT PROTEIN UL29C"/>
    <property type="match status" value="1"/>
</dbReference>
<dbReference type="Pfam" id="PF00831">
    <property type="entry name" value="Ribosomal_L29"/>
    <property type="match status" value="1"/>
</dbReference>
<dbReference type="SUPFAM" id="SSF46561">
    <property type="entry name" value="Ribosomal protein L29 (L29p)"/>
    <property type="match status" value="1"/>
</dbReference>
<dbReference type="PROSITE" id="PS00579">
    <property type="entry name" value="RIBOSOMAL_L29"/>
    <property type="match status" value="1"/>
</dbReference>
<keyword id="KW-0687">Ribonucleoprotein</keyword>
<keyword id="KW-0689">Ribosomal protein</keyword>
<reference key="1">
    <citation type="journal article" date="2007" name="Genome Res.">
        <title>Reductive evolution and niche adaptation inferred from the genome of Mycobacterium ulcerans, the causative agent of Buruli ulcer.</title>
        <authorList>
            <person name="Stinear T.P."/>
            <person name="Seemann T."/>
            <person name="Pidot S."/>
            <person name="Frigui W."/>
            <person name="Reysset G."/>
            <person name="Garnier T."/>
            <person name="Meurice G."/>
            <person name="Simon D."/>
            <person name="Bouchier C."/>
            <person name="Ma L."/>
            <person name="Tichit M."/>
            <person name="Porter J.L."/>
            <person name="Ryan J."/>
            <person name="Johnson P.D.R."/>
            <person name="Davies J.K."/>
            <person name="Jenkin G.A."/>
            <person name="Small P.L.C."/>
            <person name="Jones L.M."/>
            <person name="Tekaia F."/>
            <person name="Laval F."/>
            <person name="Daffe M."/>
            <person name="Parkhill J."/>
            <person name="Cole S.T."/>
        </authorList>
    </citation>
    <scope>NUCLEOTIDE SEQUENCE [LARGE SCALE GENOMIC DNA]</scope>
    <source>
        <strain>Agy99</strain>
    </source>
</reference>
<name>RL29_MYCUA</name>
<proteinExistence type="inferred from homology"/>
<organism>
    <name type="scientific">Mycobacterium ulcerans (strain Agy99)</name>
    <dbReference type="NCBI Taxonomy" id="362242"/>
    <lineage>
        <taxon>Bacteria</taxon>
        <taxon>Bacillati</taxon>
        <taxon>Actinomycetota</taxon>
        <taxon>Actinomycetes</taxon>
        <taxon>Mycobacteriales</taxon>
        <taxon>Mycobacteriaceae</taxon>
        <taxon>Mycobacterium</taxon>
        <taxon>Mycobacterium ulcerans group</taxon>
    </lineage>
</organism>
<evidence type="ECO:0000255" key="1">
    <source>
        <dbReference type="HAMAP-Rule" id="MF_00374"/>
    </source>
</evidence>
<evidence type="ECO:0000305" key="2"/>
<comment type="similarity">
    <text evidence="1">Belongs to the universal ribosomal protein uL29 family.</text>
</comment>
<protein>
    <recommendedName>
        <fullName evidence="1">Large ribosomal subunit protein uL29</fullName>
    </recommendedName>
    <alternativeName>
        <fullName evidence="2">50S ribosomal protein L29</fullName>
    </alternativeName>
</protein>
<accession>A0PM71</accession>
<gene>
    <name evidence="1" type="primary">rpmC</name>
    <name type="ordered locus">MUL_0798</name>
</gene>